<gene>
    <name type="primary">Rnase4</name>
</gene>
<reference key="1">
    <citation type="submission" date="2000-04" db="EMBL/GenBank/DDBJ databases">
        <authorList>
            <person name="Ikegawa S."/>
            <person name="Nakamura Y."/>
        </authorList>
    </citation>
    <scope>NUCLEOTIDE SEQUENCE [MRNA]</scope>
</reference>
<reference key="2">
    <citation type="journal article" date="2004" name="Genome Res.">
        <title>The status, quality, and expansion of the NIH full-length cDNA project: the Mammalian Gene Collection (MGC).</title>
        <authorList>
            <consortium name="The MGC Project Team"/>
        </authorList>
    </citation>
    <scope>NUCLEOTIDE SEQUENCE [LARGE SCALE MRNA]</scope>
</reference>
<reference key="3">
    <citation type="journal article" date="2010" name="Cell">
        <title>A tissue-specific atlas of mouse protein phosphorylation and expression.</title>
        <authorList>
            <person name="Huttlin E.L."/>
            <person name="Jedrychowski M.P."/>
            <person name="Elias J.E."/>
            <person name="Goswami T."/>
            <person name="Rad R."/>
            <person name="Beausoleil S.A."/>
            <person name="Villen J."/>
            <person name="Haas W."/>
            <person name="Sowa M.E."/>
            <person name="Gygi S.P."/>
        </authorList>
    </citation>
    <scope>IDENTIFICATION BY MASS SPECTROMETRY [LARGE SCALE ANALYSIS]</scope>
    <source>
        <tissue>Kidney</tissue>
        <tissue>Liver</tissue>
        <tissue>Lung</tissue>
        <tissue>Pancreas</tissue>
    </source>
</reference>
<reference key="4">
    <citation type="journal article" date="2018" name="J. Clin. Invest.">
        <title>Insulin receptor signaling regulates renal collecting duct and intercalated cell antibacterial defenses.</title>
        <authorList>
            <person name="Murtha M.J."/>
            <person name="Eichler T."/>
            <person name="Bender K."/>
            <person name="Metheny J."/>
            <person name="Li B."/>
            <person name="Schwaderer A.L."/>
            <person name="Mosquera C."/>
            <person name="James C."/>
            <person name="Schwartz L."/>
            <person name="Becknell B."/>
            <person name="Spencer J.D."/>
        </authorList>
    </citation>
    <scope>FUNCTION</scope>
    <scope>TISSUE SPECIFICITY</scope>
    <scope>INDUCTION</scope>
</reference>
<sequence>MMDLQRTQSLLLLLVLTLLGLGLVQPSYGQDRMYQRFLRQHVDPQATGGNDNYCNVMMQRRKMTSVQCKRFNTFIHEDIWNIRGICSTTNILCKNGQMNCHEGVVKVTDCRETGNSKAPNCRYRARTSTRRVVIACEGDPEVPVHFDR</sequence>
<accession>Q9JJH1</accession>
<proteinExistence type="evidence at protein level"/>
<comment type="function">
    <text evidence="4 6">Cleaves preferentially after uridine bases (By similarity). Has antimicrobial activity against uropathogenic E.coli (UPEC) (PubMed:30418175). Probably contributes to urinary tract sterility (By similarity).</text>
</comment>
<comment type="subcellular location">
    <subcellularLocation>
        <location evidence="4">Secreted</location>
    </subcellularLocation>
    <text evidence="4">Detected in urine.</text>
</comment>
<comment type="tissue specificity">
    <text evidence="6">Expressed in the cortical tubules of the kidney (at protein level) (PubMed:30418175). Also expressed in the medullary tubules of the kidney (PubMed:30418175).</text>
</comment>
<comment type="induction">
    <text evidence="6">Induced in response to insulin.</text>
</comment>
<comment type="similarity">
    <text evidence="7">Belongs to the pancreatic ribonuclease family.</text>
</comment>
<organism>
    <name type="scientific">Mus musculus</name>
    <name type="common">Mouse</name>
    <dbReference type="NCBI Taxonomy" id="10090"/>
    <lineage>
        <taxon>Eukaryota</taxon>
        <taxon>Metazoa</taxon>
        <taxon>Chordata</taxon>
        <taxon>Craniata</taxon>
        <taxon>Vertebrata</taxon>
        <taxon>Euteleostomi</taxon>
        <taxon>Mammalia</taxon>
        <taxon>Eutheria</taxon>
        <taxon>Euarchontoglires</taxon>
        <taxon>Glires</taxon>
        <taxon>Rodentia</taxon>
        <taxon>Myomorpha</taxon>
        <taxon>Muroidea</taxon>
        <taxon>Muridae</taxon>
        <taxon>Murinae</taxon>
        <taxon>Mus</taxon>
        <taxon>Mus</taxon>
    </lineage>
</organism>
<feature type="signal peptide" evidence="1">
    <location>
        <begin position="1"/>
        <end position="29"/>
    </location>
</feature>
<feature type="chain" id="PRO_0000030885" description="Ribonuclease 4">
    <location>
        <begin position="30"/>
        <end position="148"/>
    </location>
</feature>
<feature type="active site" description="Proton acceptor" evidence="5">
    <location>
        <position position="41"/>
    </location>
</feature>
<feature type="active site" description="Proton donor" evidence="5">
    <location>
        <position position="145"/>
    </location>
</feature>
<feature type="binding site" evidence="3">
    <location>
        <position position="36"/>
    </location>
    <ligand>
        <name>dUMP</name>
        <dbReference type="ChEBI" id="CHEBI:246422"/>
    </ligand>
</feature>
<feature type="binding site" evidence="3">
    <location>
        <position position="41"/>
    </location>
    <ligand>
        <name>dUMP</name>
        <dbReference type="ChEBI" id="CHEBI:246422"/>
    </ligand>
</feature>
<feature type="binding site" evidence="3">
    <location>
        <position position="69"/>
    </location>
    <ligand>
        <name>dUMP</name>
        <dbReference type="ChEBI" id="CHEBI:246422"/>
    </ligand>
</feature>
<feature type="binding site" evidence="3">
    <location>
        <position position="72"/>
    </location>
    <ligand>
        <name>dUMP</name>
        <dbReference type="ChEBI" id="CHEBI:246422"/>
    </ligand>
</feature>
<feature type="binding site" evidence="3">
    <location>
        <position position="73"/>
    </location>
    <ligand>
        <name>dUMP</name>
        <dbReference type="ChEBI" id="CHEBI:246422"/>
    </ligand>
</feature>
<feature type="binding site" evidence="3">
    <location>
        <position position="146"/>
    </location>
    <ligand>
        <name>dUMP</name>
        <dbReference type="ChEBI" id="CHEBI:246422"/>
    </ligand>
</feature>
<feature type="modified residue" description="Pyrrolidone carboxylic acid" evidence="2">
    <location>
        <position position="30"/>
    </location>
</feature>
<feature type="disulfide bond" evidence="4">
    <location>
        <begin position="54"/>
        <end position="110"/>
    </location>
</feature>
<feature type="disulfide bond" evidence="4">
    <location>
        <begin position="68"/>
        <end position="121"/>
    </location>
</feature>
<feature type="disulfide bond" evidence="4">
    <location>
        <begin position="86"/>
        <end position="136"/>
    </location>
</feature>
<feature type="disulfide bond" evidence="4">
    <location>
        <begin position="93"/>
        <end position="100"/>
    </location>
</feature>
<keyword id="KW-0044">Antibiotic</keyword>
<keyword id="KW-0929">Antimicrobial</keyword>
<keyword id="KW-1015">Disulfide bond</keyword>
<keyword id="KW-0255">Endonuclease</keyword>
<keyword id="KW-0378">Hydrolase</keyword>
<keyword id="KW-0540">Nuclease</keyword>
<keyword id="KW-0873">Pyrrolidone carboxylic acid</keyword>
<keyword id="KW-1185">Reference proteome</keyword>
<keyword id="KW-0964">Secreted</keyword>
<keyword id="KW-0732">Signal</keyword>
<dbReference type="EC" id="3.1.27.-" evidence="4"/>
<dbReference type="EMBL" id="AB041044">
    <property type="protein sequence ID" value="BAA96476.1"/>
    <property type="molecule type" value="mRNA"/>
</dbReference>
<dbReference type="EMBL" id="BC005569">
    <property type="protein sequence ID" value="AAH05569.1"/>
    <property type="molecule type" value="mRNA"/>
</dbReference>
<dbReference type="CCDS" id="CCDS27035.1"/>
<dbReference type="SMR" id="Q9JJH1"/>
<dbReference type="FunCoup" id="Q9JJH1">
    <property type="interactions" value="624"/>
</dbReference>
<dbReference type="STRING" id="10090.ENSMUSP00000022428"/>
<dbReference type="jPOST" id="Q9JJH1"/>
<dbReference type="PaxDb" id="10090-ENSMUSP00000127274"/>
<dbReference type="PeptideAtlas" id="Q9JJH1"/>
<dbReference type="ProteomicsDB" id="300455"/>
<dbReference type="AGR" id="MGI:1926217"/>
<dbReference type="MGI" id="MGI:1926217">
    <property type="gene designation" value="Rnase4"/>
</dbReference>
<dbReference type="eggNOG" id="ENOG502S9Q1">
    <property type="taxonomic scope" value="Eukaryota"/>
</dbReference>
<dbReference type="InParanoid" id="Q9JJH1"/>
<dbReference type="PhylomeDB" id="Q9JJH1"/>
<dbReference type="ChiTaRS" id="Rnase4">
    <property type="organism name" value="mouse"/>
</dbReference>
<dbReference type="PRO" id="PR:Q9JJH1"/>
<dbReference type="Proteomes" id="UP000000589">
    <property type="component" value="Unplaced"/>
</dbReference>
<dbReference type="RNAct" id="Q9JJH1">
    <property type="molecule type" value="protein"/>
</dbReference>
<dbReference type="GO" id="GO:0005615">
    <property type="term" value="C:extracellular space"/>
    <property type="evidence" value="ECO:0007005"/>
    <property type="project" value="BHF-UCL"/>
</dbReference>
<dbReference type="GO" id="GO:0004519">
    <property type="term" value="F:endonuclease activity"/>
    <property type="evidence" value="ECO:0007669"/>
    <property type="project" value="UniProtKB-KW"/>
</dbReference>
<dbReference type="GO" id="GO:0003676">
    <property type="term" value="F:nucleic acid binding"/>
    <property type="evidence" value="ECO:0007669"/>
    <property type="project" value="InterPro"/>
</dbReference>
<dbReference type="GO" id="GO:0019731">
    <property type="term" value="P:antibacterial humoral response"/>
    <property type="evidence" value="ECO:0000314"/>
    <property type="project" value="UniProtKB"/>
</dbReference>
<dbReference type="GO" id="GO:0009267">
    <property type="term" value="P:cellular response to starvation"/>
    <property type="evidence" value="ECO:0000270"/>
    <property type="project" value="MGI"/>
</dbReference>
<dbReference type="CDD" id="cd06265">
    <property type="entry name" value="RNase_A_canonical"/>
    <property type="match status" value="1"/>
</dbReference>
<dbReference type="FunFam" id="3.10.130.10:FF:000001">
    <property type="entry name" value="Ribonuclease pancreatic"/>
    <property type="match status" value="1"/>
</dbReference>
<dbReference type="Gene3D" id="3.10.130.10">
    <property type="entry name" value="Ribonuclease A-like domain"/>
    <property type="match status" value="1"/>
</dbReference>
<dbReference type="InterPro" id="IPR001427">
    <property type="entry name" value="RNaseA"/>
</dbReference>
<dbReference type="InterPro" id="IPR036816">
    <property type="entry name" value="RNaseA-like_dom_sf"/>
</dbReference>
<dbReference type="InterPro" id="IPR023411">
    <property type="entry name" value="RNaseA_AS"/>
</dbReference>
<dbReference type="InterPro" id="IPR023412">
    <property type="entry name" value="RNaseA_domain"/>
</dbReference>
<dbReference type="PANTHER" id="PTHR11437">
    <property type="entry name" value="RIBONUCLEASE"/>
    <property type="match status" value="1"/>
</dbReference>
<dbReference type="PANTHER" id="PTHR11437:SF53">
    <property type="entry name" value="RIBONUCLEASE 4"/>
    <property type="match status" value="1"/>
</dbReference>
<dbReference type="Pfam" id="PF00074">
    <property type="entry name" value="RnaseA"/>
    <property type="match status" value="1"/>
</dbReference>
<dbReference type="PRINTS" id="PR00794">
    <property type="entry name" value="RIBONUCLEASE"/>
</dbReference>
<dbReference type="SMART" id="SM00092">
    <property type="entry name" value="RNAse_Pc"/>
    <property type="match status" value="1"/>
</dbReference>
<dbReference type="SUPFAM" id="SSF54076">
    <property type="entry name" value="RNase A-like"/>
    <property type="match status" value="1"/>
</dbReference>
<dbReference type="PROSITE" id="PS00127">
    <property type="entry name" value="RNASE_PANCREATIC"/>
    <property type="match status" value="1"/>
</dbReference>
<evidence type="ECO:0000250" key="1"/>
<evidence type="ECO:0000250" key="2">
    <source>
        <dbReference type="UniProtKB" id="P15467"/>
    </source>
</evidence>
<evidence type="ECO:0000250" key="3">
    <source>
        <dbReference type="UniProtKB" id="P15468"/>
    </source>
</evidence>
<evidence type="ECO:0000250" key="4">
    <source>
        <dbReference type="UniProtKB" id="P34096"/>
    </source>
</evidence>
<evidence type="ECO:0000250" key="5">
    <source>
        <dbReference type="UniProtKB" id="Q9H1E1"/>
    </source>
</evidence>
<evidence type="ECO:0000269" key="6">
    <source>
    </source>
</evidence>
<evidence type="ECO:0000305" key="7"/>
<protein>
    <recommendedName>
        <fullName>Ribonuclease 4</fullName>
        <shortName>RNase 4</shortName>
        <ecNumber evidence="4">3.1.27.-</ecNumber>
    </recommendedName>
</protein>
<name>RNAS4_MOUSE</name>